<organism>
    <name type="scientific">Pseudomonas savastanoi pv. phaseolicola (strain 1448A / Race 6)</name>
    <name type="common">Pseudomonas syringae pv. phaseolicola (strain 1448A / Race 6)</name>
    <dbReference type="NCBI Taxonomy" id="264730"/>
    <lineage>
        <taxon>Bacteria</taxon>
        <taxon>Pseudomonadati</taxon>
        <taxon>Pseudomonadota</taxon>
        <taxon>Gammaproteobacteria</taxon>
        <taxon>Pseudomonadales</taxon>
        <taxon>Pseudomonadaceae</taxon>
        <taxon>Pseudomonas</taxon>
    </lineage>
</organism>
<feature type="chain" id="PRO_1000013584" description="Protein RnfH">
    <location>
        <begin position="1"/>
        <end position="104"/>
    </location>
</feature>
<proteinExistence type="inferred from homology"/>
<comment type="similarity">
    <text evidence="1">Belongs to the UPF0125 (RnfH) family.</text>
</comment>
<dbReference type="EMBL" id="CP000058">
    <property type="protein sequence ID" value="AAZ37872.1"/>
    <property type="molecule type" value="Genomic_DNA"/>
</dbReference>
<dbReference type="RefSeq" id="WP_002555144.1">
    <property type="nucleotide sequence ID" value="NC_005773.3"/>
</dbReference>
<dbReference type="SMR" id="Q48E57"/>
<dbReference type="KEGG" id="psp:PSPPH_4211"/>
<dbReference type="eggNOG" id="COG2914">
    <property type="taxonomic scope" value="Bacteria"/>
</dbReference>
<dbReference type="HOGENOM" id="CLU_150721_1_0_6"/>
<dbReference type="Proteomes" id="UP000000551">
    <property type="component" value="Chromosome"/>
</dbReference>
<dbReference type="Gene3D" id="3.10.20.280">
    <property type="entry name" value="RnfH-like"/>
    <property type="match status" value="1"/>
</dbReference>
<dbReference type="HAMAP" id="MF_00460">
    <property type="entry name" value="UPF0125_RnfH"/>
    <property type="match status" value="1"/>
</dbReference>
<dbReference type="InterPro" id="IPR016155">
    <property type="entry name" value="Mopterin_synth/thiamin_S_b"/>
</dbReference>
<dbReference type="InterPro" id="IPR005346">
    <property type="entry name" value="RnfH"/>
</dbReference>
<dbReference type="InterPro" id="IPR037021">
    <property type="entry name" value="RnfH_sf"/>
</dbReference>
<dbReference type="NCBIfam" id="NF002490">
    <property type="entry name" value="PRK01777.1"/>
    <property type="match status" value="1"/>
</dbReference>
<dbReference type="PANTHER" id="PTHR37483">
    <property type="entry name" value="UPF0125 PROTEIN RATB"/>
    <property type="match status" value="1"/>
</dbReference>
<dbReference type="PANTHER" id="PTHR37483:SF1">
    <property type="entry name" value="UPF0125 PROTEIN RATB"/>
    <property type="match status" value="1"/>
</dbReference>
<dbReference type="Pfam" id="PF03658">
    <property type="entry name" value="Ub-RnfH"/>
    <property type="match status" value="1"/>
</dbReference>
<dbReference type="SUPFAM" id="SSF54285">
    <property type="entry name" value="MoaD/ThiS"/>
    <property type="match status" value="1"/>
</dbReference>
<reference key="1">
    <citation type="journal article" date="2005" name="J. Bacteriol.">
        <title>Whole-genome sequence analysis of Pseudomonas syringae pv. phaseolicola 1448A reveals divergence among pathovars in genes involved in virulence and transposition.</title>
        <authorList>
            <person name="Joardar V."/>
            <person name="Lindeberg M."/>
            <person name="Jackson R.W."/>
            <person name="Selengut J."/>
            <person name="Dodson R."/>
            <person name="Brinkac L.M."/>
            <person name="Daugherty S.C."/>
            <person name="DeBoy R.T."/>
            <person name="Durkin A.S."/>
            <person name="Gwinn Giglio M."/>
            <person name="Madupu R."/>
            <person name="Nelson W.C."/>
            <person name="Rosovitz M.J."/>
            <person name="Sullivan S.A."/>
            <person name="Crabtree J."/>
            <person name="Creasy T."/>
            <person name="Davidsen T.M."/>
            <person name="Haft D.H."/>
            <person name="Zafar N."/>
            <person name="Zhou L."/>
            <person name="Halpin R."/>
            <person name="Holley T."/>
            <person name="Khouri H.M."/>
            <person name="Feldblyum T.V."/>
            <person name="White O."/>
            <person name="Fraser C.M."/>
            <person name="Chatterjee A.K."/>
            <person name="Cartinhour S."/>
            <person name="Schneider D."/>
            <person name="Mansfield J.W."/>
            <person name="Collmer A."/>
            <person name="Buell R."/>
        </authorList>
    </citation>
    <scope>NUCLEOTIDE SEQUENCE [LARGE SCALE GENOMIC DNA]</scope>
    <source>
        <strain>1448A / Race 6</strain>
    </source>
</reference>
<sequence length="104" mass="11448">MAEAVIQIEVVYASVQRQVLMTLDVPAGSSVRQALALSGMDREFPELDLAQCAVGIFGKVVADPSTRVLEAGERIEIYRPLLADPMEIRRLRAARAREKRTLPG</sequence>
<name>RNFH_PSE14</name>
<gene>
    <name evidence="1" type="primary">rnfH</name>
    <name type="ordered locus">PSPPH_4211</name>
</gene>
<evidence type="ECO:0000255" key="1">
    <source>
        <dbReference type="HAMAP-Rule" id="MF_00460"/>
    </source>
</evidence>
<accession>Q48E57</accession>
<protein>
    <recommendedName>
        <fullName evidence="1">Protein RnfH</fullName>
    </recommendedName>
</protein>